<geneLocation type="chloroplast"/>
<comment type="function">
    <text evidence="1">Binds directly to 23S ribosomal RNA and is necessary for the in vitro assembly process of the 50S ribosomal subunit. It is not involved in the protein synthesizing functions of that subunit.</text>
</comment>
<comment type="subcellular location">
    <subcellularLocation>
        <location>Plastid</location>
        <location>Chloroplast</location>
    </subcellularLocation>
</comment>
<comment type="similarity">
    <text evidence="1">Belongs to the bacterial ribosomal protein bL20 family.</text>
</comment>
<dbReference type="EMBL" id="DQ291132">
    <property type="protein sequence ID" value="ABB81962.1"/>
    <property type="molecule type" value="Genomic_DNA"/>
</dbReference>
<dbReference type="RefSeq" id="YP_635894.1">
    <property type="nucleotide sequence ID" value="NC_008099.1"/>
</dbReference>
<dbReference type="SMR" id="Q20EV1"/>
<dbReference type="GeneID" id="4100099"/>
<dbReference type="GO" id="GO:0009507">
    <property type="term" value="C:chloroplast"/>
    <property type="evidence" value="ECO:0007669"/>
    <property type="project" value="UniProtKB-SubCell"/>
</dbReference>
<dbReference type="GO" id="GO:1990904">
    <property type="term" value="C:ribonucleoprotein complex"/>
    <property type="evidence" value="ECO:0007669"/>
    <property type="project" value="UniProtKB-KW"/>
</dbReference>
<dbReference type="GO" id="GO:0005840">
    <property type="term" value="C:ribosome"/>
    <property type="evidence" value="ECO:0007669"/>
    <property type="project" value="UniProtKB-KW"/>
</dbReference>
<dbReference type="GO" id="GO:0019843">
    <property type="term" value="F:rRNA binding"/>
    <property type="evidence" value="ECO:0007669"/>
    <property type="project" value="UniProtKB-UniRule"/>
</dbReference>
<dbReference type="GO" id="GO:0003735">
    <property type="term" value="F:structural constituent of ribosome"/>
    <property type="evidence" value="ECO:0007669"/>
    <property type="project" value="InterPro"/>
</dbReference>
<dbReference type="GO" id="GO:0000027">
    <property type="term" value="P:ribosomal large subunit assembly"/>
    <property type="evidence" value="ECO:0007669"/>
    <property type="project" value="UniProtKB-UniRule"/>
</dbReference>
<dbReference type="GO" id="GO:0006412">
    <property type="term" value="P:translation"/>
    <property type="evidence" value="ECO:0007669"/>
    <property type="project" value="InterPro"/>
</dbReference>
<dbReference type="CDD" id="cd07026">
    <property type="entry name" value="Ribosomal_L20"/>
    <property type="match status" value="1"/>
</dbReference>
<dbReference type="FunFam" id="1.10.1900.20:FF:000001">
    <property type="entry name" value="50S ribosomal protein L20"/>
    <property type="match status" value="1"/>
</dbReference>
<dbReference type="Gene3D" id="6.10.160.10">
    <property type="match status" value="1"/>
</dbReference>
<dbReference type="Gene3D" id="1.10.1900.20">
    <property type="entry name" value="Ribosomal protein L20"/>
    <property type="match status" value="1"/>
</dbReference>
<dbReference type="HAMAP" id="MF_00382">
    <property type="entry name" value="Ribosomal_bL20"/>
    <property type="match status" value="1"/>
</dbReference>
<dbReference type="InterPro" id="IPR005813">
    <property type="entry name" value="Ribosomal_bL20"/>
</dbReference>
<dbReference type="InterPro" id="IPR049946">
    <property type="entry name" value="RIBOSOMAL_L20_CS"/>
</dbReference>
<dbReference type="InterPro" id="IPR035566">
    <property type="entry name" value="Ribosomal_protein_bL20_C"/>
</dbReference>
<dbReference type="NCBIfam" id="TIGR01032">
    <property type="entry name" value="rplT_bact"/>
    <property type="match status" value="1"/>
</dbReference>
<dbReference type="PANTHER" id="PTHR10986">
    <property type="entry name" value="39S RIBOSOMAL PROTEIN L20"/>
    <property type="match status" value="1"/>
</dbReference>
<dbReference type="Pfam" id="PF00453">
    <property type="entry name" value="Ribosomal_L20"/>
    <property type="match status" value="1"/>
</dbReference>
<dbReference type="PRINTS" id="PR00062">
    <property type="entry name" value="RIBOSOMALL20"/>
</dbReference>
<dbReference type="SUPFAM" id="SSF74731">
    <property type="entry name" value="Ribosomal protein L20"/>
    <property type="match status" value="1"/>
</dbReference>
<dbReference type="PROSITE" id="PS00937">
    <property type="entry name" value="RIBOSOMAL_L20"/>
    <property type="match status" value="1"/>
</dbReference>
<reference key="1">
    <citation type="journal article" date="2006" name="BMC Biol.">
        <title>The complete chloroplast DNA sequence of the green alga Oltmannsiellopsis viridis reveals a distinctive quadripartite architecture in the chloroplast genome of early diverging ulvophytes.</title>
        <authorList>
            <person name="Pombert J.-F."/>
            <person name="Lemieux C."/>
            <person name="Turmel M."/>
        </authorList>
    </citation>
    <scope>NUCLEOTIDE SEQUENCE [LARGE SCALE GENOMIC DNA]</scope>
</reference>
<protein>
    <recommendedName>
        <fullName evidence="1">Large ribosomal subunit protein bL20c</fullName>
    </recommendedName>
    <alternativeName>
        <fullName evidence="2">50S ribosomal protein L20, chloroplastic</fullName>
    </alternativeName>
</protein>
<accession>Q20EV1</accession>
<organism>
    <name type="scientific">Oltmannsiellopsis viridis</name>
    <name type="common">Marine flagellate</name>
    <name type="synonym">Oltmannsiella viridis</name>
    <dbReference type="NCBI Taxonomy" id="51324"/>
    <lineage>
        <taxon>Eukaryota</taxon>
        <taxon>Viridiplantae</taxon>
        <taxon>Chlorophyta</taxon>
        <taxon>Ulvophyceae</taxon>
        <taxon>Oltmannsiellopsidales</taxon>
        <taxon>Oltmannsiellopsidaceae</taxon>
        <taxon>Oltmannsiellopsis</taxon>
    </lineage>
</organism>
<proteinExistence type="inferred from homology"/>
<gene>
    <name evidence="1" type="primary">rpl20</name>
</gene>
<evidence type="ECO:0000255" key="1">
    <source>
        <dbReference type="HAMAP-Rule" id="MF_00382"/>
    </source>
</evidence>
<evidence type="ECO:0000305" key="2"/>
<sequence>MTRVKRGYVARKRRKKVLSLTKGFRGSSSVLFRSANQRNMKALKYAYRDRRKMKREFRKLWITRINAATRMSNMTYSTFIHKLKKANIVLNRKLLAQLAVRDQQVFQQLFSYIEGV</sequence>
<feature type="chain" id="PRO_0000276418" description="Large ribosomal subunit protein bL20c">
    <location>
        <begin position="1"/>
        <end position="116"/>
    </location>
</feature>
<keyword id="KW-0150">Chloroplast</keyword>
<keyword id="KW-0934">Plastid</keyword>
<keyword id="KW-0687">Ribonucleoprotein</keyword>
<keyword id="KW-0689">Ribosomal protein</keyword>
<keyword id="KW-0694">RNA-binding</keyword>
<keyword id="KW-0699">rRNA-binding</keyword>
<name>RK20_OLTVI</name>